<dbReference type="EC" id="2.7.1.170" evidence="1"/>
<dbReference type="EMBL" id="CP000243">
    <property type="protein sequence ID" value="ABE07309.1"/>
    <property type="molecule type" value="Genomic_DNA"/>
</dbReference>
<dbReference type="RefSeq" id="WP_000835069.1">
    <property type="nucleotide sequence ID" value="NZ_CP064825.1"/>
</dbReference>
<dbReference type="SMR" id="Q1RBF5"/>
<dbReference type="KEGG" id="eci:UTI89_C1831"/>
<dbReference type="HOGENOM" id="CLU_038782_0_0_6"/>
<dbReference type="UniPathway" id="UPA00343"/>
<dbReference type="UniPathway" id="UPA00544"/>
<dbReference type="Proteomes" id="UP000001952">
    <property type="component" value="Chromosome"/>
</dbReference>
<dbReference type="GO" id="GO:0005524">
    <property type="term" value="F:ATP binding"/>
    <property type="evidence" value="ECO:0007669"/>
    <property type="project" value="UniProtKB-UniRule"/>
</dbReference>
<dbReference type="GO" id="GO:0016301">
    <property type="term" value="F:kinase activity"/>
    <property type="evidence" value="ECO:0007669"/>
    <property type="project" value="UniProtKB-KW"/>
</dbReference>
<dbReference type="GO" id="GO:0016773">
    <property type="term" value="F:phosphotransferase activity, alcohol group as acceptor"/>
    <property type="evidence" value="ECO:0007669"/>
    <property type="project" value="UniProtKB-UniRule"/>
</dbReference>
<dbReference type="GO" id="GO:0097175">
    <property type="term" value="P:1,6-anhydro-N-acetyl-beta-muramic acid catabolic process"/>
    <property type="evidence" value="ECO:0007669"/>
    <property type="project" value="UniProtKB-UniRule"/>
</dbReference>
<dbReference type="GO" id="GO:0006040">
    <property type="term" value="P:amino sugar metabolic process"/>
    <property type="evidence" value="ECO:0007669"/>
    <property type="project" value="InterPro"/>
</dbReference>
<dbReference type="GO" id="GO:0009254">
    <property type="term" value="P:peptidoglycan turnover"/>
    <property type="evidence" value="ECO:0007669"/>
    <property type="project" value="UniProtKB-UniRule"/>
</dbReference>
<dbReference type="CDD" id="cd24050">
    <property type="entry name" value="ASKHA_NBD_ANMK"/>
    <property type="match status" value="1"/>
</dbReference>
<dbReference type="FunFam" id="3.30.420.40:FF:000090">
    <property type="entry name" value="Anhydro-N-acetylmuramic acid kinase"/>
    <property type="match status" value="1"/>
</dbReference>
<dbReference type="Gene3D" id="3.30.420.40">
    <property type="match status" value="2"/>
</dbReference>
<dbReference type="HAMAP" id="MF_01270">
    <property type="entry name" value="AnhMurNAc_kinase"/>
    <property type="match status" value="1"/>
</dbReference>
<dbReference type="InterPro" id="IPR005338">
    <property type="entry name" value="Anhydro_N_Ac-Mur_kinase"/>
</dbReference>
<dbReference type="InterPro" id="IPR043129">
    <property type="entry name" value="ATPase_NBD"/>
</dbReference>
<dbReference type="NCBIfam" id="NF007138">
    <property type="entry name" value="PRK09585.1-1"/>
    <property type="match status" value="1"/>
</dbReference>
<dbReference type="NCBIfam" id="NF007139">
    <property type="entry name" value="PRK09585.1-3"/>
    <property type="match status" value="1"/>
</dbReference>
<dbReference type="NCBIfam" id="NF007148">
    <property type="entry name" value="PRK09585.3-2"/>
    <property type="match status" value="1"/>
</dbReference>
<dbReference type="PANTHER" id="PTHR30605">
    <property type="entry name" value="ANHYDRO-N-ACETYLMURAMIC ACID KINASE"/>
    <property type="match status" value="1"/>
</dbReference>
<dbReference type="PANTHER" id="PTHR30605:SF0">
    <property type="entry name" value="ANHYDRO-N-ACETYLMURAMIC ACID KINASE"/>
    <property type="match status" value="1"/>
</dbReference>
<dbReference type="Pfam" id="PF03702">
    <property type="entry name" value="AnmK"/>
    <property type="match status" value="1"/>
</dbReference>
<dbReference type="SUPFAM" id="SSF53067">
    <property type="entry name" value="Actin-like ATPase domain"/>
    <property type="match status" value="1"/>
</dbReference>
<sequence length="369" mass="39494">MKSGRFIGVMSGTSLDGVDVVLATIDEHRVAQLASLSWPIPVSLKQAVLDICQGQQLTLSQFGQLDTQLGRLFADAVNALLKEQNLQARDIVAIGCHGQTVWHEPTGVAPHTLQIGDNNQIVARTGITVVGDFRRRDIALGGQGAPLVPAFHHALLAHPTERRMVLNIGGIANLSLLIPGQPVGGYDTGPGNMLMDAWIWRQAGKPYDKDAEWARAGKVILPLLQNMLSDPYFSQPAPKSTGREYFNYGWLERHLRHFPGVDPRDVQATLAELTAVTISEQVLLSGGCERLMVCGGGGRNPLLMARLAALLPGTEVTTTDAVGISGDDMEALAFAWLAWRTLAGLPGNLPSVTGASQETVLGAIFPANP</sequence>
<organism>
    <name type="scientific">Escherichia coli (strain UTI89 / UPEC)</name>
    <dbReference type="NCBI Taxonomy" id="364106"/>
    <lineage>
        <taxon>Bacteria</taxon>
        <taxon>Pseudomonadati</taxon>
        <taxon>Pseudomonadota</taxon>
        <taxon>Gammaproteobacteria</taxon>
        <taxon>Enterobacterales</taxon>
        <taxon>Enterobacteriaceae</taxon>
        <taxon>Escherichia</taxon>
    </lineage>
</organism>
<protein>
    <recommendedName>
        <fullName evidence="1">Anhydro-N-acetylmuramic acid kinase</fullName>
        <ecNumber evidence="1">2.7.1.170</ecNumber>
    </recommendedName>
    <alternativeName>
        <fullName evidence="1">AnhMurNAc kinase</fullName>
    </alternativeName>
</protein>
<name>ANMK_ECOUT</name>
<gene>
    <name evidence="1" type="primary">anmK</name>
    <name type="ordered locus">UTI89_C1831</name>
</gene>
<accession>Q1RBF5</accession>
<proteinExistence type="inferred from homology"/>
<reference key="1">
    <citation type="journal article" date="2006" name="Proc. Natl. Acad. Sci. U.S.A.">
        <title>Identification of genes subject to positive selection in uropathogenic strains of Escherichia coli: a comparative genomics approach.</title>
        <authorList>
            <person name="Chen S.L."/>
            <person name="Hung C.-S."/>
            <person name="Xu J."/>
            <person name="Reigstad C.S."/>
            <person name="Magrini V."/>
            <person name="Sabo A."/>
            <person name="Blasiar D."/>
            <person name="Bieri T."/>
            <person name="Meyer R.R."/>
            <person name="Ozersky P."/>
            <person name="Armstrong J.R."/>
            <person name="Fulton R.S."/>
            <person name="Latreille J.P."/>
            <person name="Spieth J."/>
            <person name="Hooton T.M."/>
            <person name="Mardis E.R."/>
            <person name="Hultgren S.J."/>
            <person name="Gordon J.I."/>
        </authorList>
    </citation>
    <scope>NUCLEOTIDE SEQUENCE [LARGE SCALE GENOMIC DNA]</scope>
    <source>
        <strain>UTI89 / UPEC</strain>
    </source>
</reference>
<evidence type="ECO:0000255" key="1">
    <source>
        <dbReference type="HAMAP-Rule" id="MF_01270"/>
    </source>
</evidence>
<comment type="function">
    <text evidence="1">Catalyzes the specific phosphorylation of 1,6-anhydro-N-acetylmuramic acid (anhMurNAc) with the simultaneous cleavage of the 1,6-anhydro ring, generating MurNAc-6-P. Is required for the utilization of anhMurNAc either imported from the medium or derived from its own cell wall murein, and thus plays a role in cell wall recycling.</text>
</comment>
<comment type="catalytic activity">
    <reaction evidence="1">
        <text>1,6-anhydro-N-acetyl-beta-muramate + ATP + H2O = N-acetyl-D-muramate 6-phosphate + ADP + H(+)</text>
        <dbReference type="Rhea" id="RHEA:24952"/>
        <dbReference type="ChEBI" id="CHEBI:15377"/>
        <dbReference type="ChEBI" id="CHEBI:15378"/>
        <dbReference type="ChEBI" id="CHEBI:30616"/>
        <dbReference type="ChEBI" id="CHEBI:58690"/>
        <dbReference type="ChEBI" id="CHEBI:58722"/>
        <dbReference type="ChEBI" id="CHEBI:456216"/>
        <dbReference type="EC" id="2.7.1.170"/>
    </reaction>
</comment>
<comment type="pathway">
    <text evidence="1">Amino-sugar metabolism; 1,6-anhydro-N-acetylmuramate degradation.</text>
</comment>
<comment type="pathway">
    <text evidence="1">Cell wall biogenesis; peptidoglycan recycling.</text>
</comment>
<comment type="similarity">
    <text evidence="1">Belongs to the anhydro-N-acetylmuramic acid kinase family.</text>
</comment>
<keyword id="KW-0067">ATP-binding</keyword>
<keyword id="KW-0119">Carbohydrate metabolism</keyword>
<keyword id="KW-0418">Kinase</keyword>
<keyword id="KW-0547">Nucleotide-binding</keyword>
<keyword id="KW-0808">Transferase</keyword>
<feature type="chain" id="PRO_0000249998" description="Anhydro-N-acetylmuramic acid kinase">
    <location>
        <begin position="1"/>
        <end position="369"/>
    </location>
</feature>
<feature type="binding site" evidence="1">
    <location>
        <begin position="12"/>
        <end position="19"/>
    </location>
    <ligand>
        <name>ATP</name>
        <dbReference type="ChEBI" id="CHEBI:30616"/>
    </ligand>
</feature>